<keyword id="KW-0687">Ribonucleoprotein</keyword>
<keyword id="KW-0689">Ribosomal protein</keyword>
<keyword id="KW-0694">RNA-binding</keyword>
<keyword id="KW-0699">rRNA-binding</keyword>
<protein>
    <recommendedName>
        <fullName evidence="1">Large ribosomal subunit protein uL15</fullName>
    </recommendedName>
    <alternativeName>
        <fullName evidence="3">50S ribosomal protein L15</fullName>
    </alternativeName>
</protein>
<evidence type="ECO:0000255" key="1">
    <source>
        <dbReference type="HAMAP-Rule" id="MF_01341"/>
    </source>
</evidence>
<evidence type="ECO:0000256" key="2">
    <source>
        <dbReference type="SAM" id="MobiDB-lite"/>
    </source>
</evidence>
<evidence type="ECO:0000305" key="3"/>
<organism>
    <name type="scientific">Streptococcus pyogenes serotype M4 (strain MGAS10750)</name>
    <dbReference type="NCBI Taxonomy" id="370554"/>
    <lineage>
        <taxon>Bacteria</taxon>
        <taxon>Bacillati</taxon>
        <taxon>Bacillota</taxon>
        <taxon>Bacilli</taxon>
        <taxon>Lactobacillales</taxon>
        <taxon>Streptococcaceae</taxon>
        <taxon>Streptococcus</taxon>
    </lineage>
</organism>
<sequence length="146" mass="15421">MKLHELKAAEGSRKVRNRVGRGTSSGNGKTSGRGQKGQKARSGGGVRLGFEGGQTPLFRRIPKRGFTNINTKEYALVNLDQLNVFDDGTEVTPAILKDAGIVRAEKSGVKVLGNGELTKKLTVKAAKFSKSAEAAIIAKGGSIEVI</sequence>
<proteinExistence type="inferred from homology"/>
<dbReference type="EMBL" id="CP000262">
    <property type="protein sequence ID" value="ABF37017.1"/>
    <property type="molecule type" value="Genomic_DNA"/>
</dbReference>
<dbReference type="SMR" id="Q1J8Z4"/>
<dbReference type="KEGG" id="spi:MGAS10750_Spy0067"/>
<dbReference type="HOGENOM" id="CLU_055188_4_2_9"/>
<dbReference type="Proteomes" id="UP000002434">
    <property type="component" value="Chromosome"/>
</dbReference>
<dbReference type="GO" id="GO:0022625">
    <property type="term" value="C:cytosolic large ribosomal subunit"/>
    <property type="evidence" value="ECO:0007669"/>
    <property type="project" value="TreeGrafter"/>
</dbReference>
<dbReference type="GO" id="GO:0019843">
    <property type="term" value="F:rRNA binding"/>
    <property type="evidence" value="ECO:0007669"/>
    <property type="project" value="UniProtKB-UniRule"/>
</dbReference>
<dbReference type="GO" id="GO:0003735">
    <property type="term" value="F:structural constituent of ribosome"/>
    <property type="evidence" value="ECO:0007669"/>
    <property type="project" value="InterPro"/>
</dbReference>
<dbReference type="GO" id="GO:0006412">
    <property type="term" value="P:translation"/>
    <property type="evidence" value="ECO:0007669"/>
    <property type="project" value="UniProtKB-UniRule"/>
</dbReference>
<dbReference type="Gene3D" id="3.100.10.10">
    <property type="match status" value="1"/>
</dbReference>
<dbReference type="HAMAP" id="MF_01341">
    <property type="entry name" value="Ribosomal_uL15"/>
    <property type="match status" value="1"/>
</dbReference>
<dbReference type="InterPro" id="IPR030878">
    <property type="entry name" value="Ribosomal_uL15"/>
</dbReference>
<dbReference type="InterPro" id="IPR021131">
    <property type="entry name" value="Ribosomal_uL15/eL18"/>
</dbReference>
<dbReference type="InterPro" id="IPR036227">
    <property type="entry name" value="Ribosomal_uL15/eL18_sf"/>
</dbReference>
<dbReference type="InterPro" id="IPR005749">
    <property type="entry name" value="Ribosomal_uL15_bac-type"/>
</dbReference>
<dbReference type="InterPro" id="IPR001196">
    <property type="entry name" value="Ribosomal_uL15_CS"/>
</dbReference>
<dbReference type="NCBIfam" id="TIGR01071">
    <property type="entry name" value="rplO_bact"/>
    <property type="match status" value="1"/>
</dbReference>
<dbReference type="PANTHER" id="PTHR12934">
    <property type="entry name" value="50S RIBOSOMAL PROTEIN L15"/>
    <property type="match status" value="1"/>
</dbReference>
<dbReference type="PANTHER" id="PTHR12934:SF11">
    <property type="entry name" value="LARGE RIBOSOMAL SUBUNIT PROTEIN UL15M"/>
    <property type="match status" value="1"/>
</dbReference>
<dbReference type="Pfam" id="PF00828">
    <property type="entry name" value="Ribosomal_L27A"/>
    <property type="match status" value="1"/>
</dbReference>
<dbReference type="SUPFAM" id="SSF52080">
    <property type="entry name" value="Ribosomal proteins L15p and L18e"/>
    <property type="match status" value="1"/>
</dbReference>
<dbReference type="PROSITE" id="PS00475">
    <property type="entry name" value="RIBOSOMAL_L15"/>
    <property type="match status" value="1"/>
</dbReference>
<comment type="function">
    <text evidence="1">Binds to the 23S rRNA.</text>
</comment>
<comment type="subunit">
    <text evidence="1">Part of the 50S ribosomal subunit.</text>
</comment>
<comment type="similarity">
    <text evidence="1">Belongs to the universal ribosomal protein uL15 family.</text>
</comment>
<gene>
    <name evidence="1" type="primary">rplO</name>
    <name type="ordered locus">MGAS10750_Spy0067</name>
</gene>
<feature type="chain" id="PRO_0000251572" description="Large ribosomal subunit protein uL15">
    <location>
        <begin position="1"/>
        <end position="146"/>
    </location>
</feature>
<feature type="region of interest" description="Disordered" evidence="2">
    <location>
        <begin position="1"/>
        <end position="51"/>
    </location>
</feature>
<feature type="compositionally biased region" description="Basic and acidic residues" evidence="2">
    <location>
        <begin position="1"/>
        <end position="13"/>
    </location>
</feature>
<feature type="compositionally biased region" description="Gly residues" evidence="2">
    <location>
        <begin position="23"/>
        <end position="35"/>
    </location>
</feature>
<feature type="compositionally biased region" description="Gly residues" evidence="2">
    <location>
        <begin position="42"/>
        <end position="51"/>
    </location>
</feature>
<name>RL15_STRPF</name>
<reference key="1">
    <citation type="journal article" date="2006" name="Proc. Natl. Acad. Sci. U.S.A.">
        <title>Molecular genetic anatomy of inter- and intraserotype variation in the human bacterial pathogen group A Streptococcus.</title>
        <authorList>
            <person name="Beres S.B."/>
            <person name="Richter E.W."/>
            <person name="Nagiec M.J."/>
            <person name="Sumby P."/>
            <person name="Porcella S.F."/>
            <person name="DeLeo F.R."/>
            <person name="Musser J.M."/>
        </authorList>
    </citation>
    <scope>NUCLEOTIDE SEQUENCE [LARGE SCALE GENOMIC DNA]</scope>
    <source>
        <strain>MGAS10750</strain>
    </source>
</reference>
<accession>Q1J8Z4</accession>